<proteinExistence type="inferred from homology"/>
<organism>
    <name type="scientific">Haemophilus influenzae (strain PittGG)</name>
    <dbReference type="NCBI Taxonomy" id="374931"/>
    <lineage>
        <taxon>Bacteria</taxon>
        <taxon>Pseudomonadati</taxon>
        <taxon>Pseudomonadota</taxon>
        <taxon>Gammaproteobacteria</taxon>
        <taxon>Pasteurellales</taxon>
        <taxon>Pasteurellaceae</taxon>
        <taxon>Haemophilus</taxon>
    </lineage>
</organism>
<reference key="1">
    <citation type="journal article" date="2007" name="Genome Biol.">
        <title>Characterization and modeling of the Haemophilus influenzae core and supragenomes based on the complete genomic sequences of Rd and 12 clinical nontypeable strains.</title>
        <authorList>
            <person name="Hogg J.S."/>
            <person name="Hu F.Z."/>
            <person name="Janto B."/>
            <person name="Boissy R."/>
            <person name="Hayes J."/>
            <person name="Keefe R."/>
            <person name="Post J.C."/>
            <person name="Ehrlich G.D."/>
        </authorList>
    </citation>
    <scope>NUCLEOTIDE SEQUENCE [LARGE SCALE GENOMIC DNA]</scope>
    <source>
        <strain>PittGG</strain>
    </source>
</reference>
<evidence type="ECO:0000255" key="1">
    <source>
        <dbReference type="HAMAP-Rule" id="MF_01595"/>
    </source>
</evidence>
<keyword id="KW-0963">Cytoplasm</keyword>
<keyword id="KW-0460">Magnesium</keyword>
<keyword id="KW-0479">Metal-binding</keyword>
<keyword id="KW-0548">Nucleotidyltransferase</keyword>
<keyword id="KW-0694">RNA-binding</keyword>
<keyword id="KW-0808">Transferase</keyword>
<comment type="function">
    <text evidence="1">Involved in mRNA degradation. Catalyzes the phosphorolysis of single-stranded polyribonucleotides processively in the 3'- to 5'-direction.</text>
</comment>
<comment type="catalytic activity">
    <reaction evidence="1">
        <text>RNA(n+1) + phosphate = RNA(n) + a ribonucleoside 5'-diphosphate</text>
        <dbReference type="Rhea" id="RHEA:22096"/>
        <dbReference type="Rhea" id="RHEA-COMP:14527"/>
        <dbReference type="Rhea" id="RHEA-COMP:17342"/>
        <dbReference type="ChEBI" id="CHEBI:43474"/>
        <dbReference type="ChEBI" id="CHEBI:57930"/>
        <dbReference type="ChEBI" id="CHEBI:140395"/>
        <dbReference type="EC" id="2.7.7.8"/>
    </reaction>
</comment>
<comment type="cofactor">
    <cofactor evidence="1">
        <name>Mg(2+)</name>
        <dbReference type="ChEBI" id="CHEBI:18420"/>
    </cofactor>
</comment>
<comment type="subunit">
    <text evidence="1">Component of the RNA degradosome, which is a multiprotein complex involved in RNA processing and mRNA degradation.</text>
</comment>
<comment type="subcellular location">
    <subcellularLocation>
        <location evidence="1">Cytoplasm</location>
    </subcellularLocation>
</comment>
<comment type="similarity">
    <text evidence="1">Belongs to the polyribonucleotide nucleotidyltransferase family.</text>
</comment>
<name>PNP_HAEIG</name>
<sequence length="709" mass="77050">MNPIVKQFKYGQHTVTLETGAIARQATAAVMASMDDTTVFVTVVAKKDVKEGQDFFPLTVNYQERTYAAGKIPGGFFKREGRPSEGETLIARLIDRPIRPLFPEGFFNEIQVVATVVSVNPQISPDLVAMIGASAALTLSGVPFNGPIGAVRVGFIDNQFVLNPTMAEQKQSRLDLVVAGTDKAVLMVESEADILTEEQMLAAVVFGHQQQQVVIEAIKEFAKEAGKPRWDWVAPQPNTDLINKVKAIAEARLGDAYRITEKQLRYEQIDAIKADVIAQITAEDEEINEGKIVDIFTALESQIVRGRIIAGEPRIDGRTVDTVRALDICTGVLPRTHGSAIFTRGETQALAVATLGTERDAQIIDELTGERQDHFLFHYNFPPYSVGETGMIGSPKRREIGHGRLAKRGVAAVMPSLAEFPYVVRVVSEITESNGSSSMASVCGASLALMDAGVPIKAAVAGIAMGLVKEEEKFVVLSDILGDEDHLGDMDFKVAGTREGVTALQMDIKIEGITPEIMQIALNQAKSARMHILGVMEQAIPAPRADISDYAPRIYTMKIDPKKIKDVIGKGGATIRSLTEETGTSIDIDDDGTVKIAAVDSNAAKNVMGRIEEIVAEVEAGAIYKGKVTRLADFGAFVAIVGNKEGLVHISQIAEERVEKVSDYLQVGQEVNVKVVEIDRQGRIRLTMKDLAPKQETEINQEDSVEEQE</sequence>
<accession>A5UG34</accession>
<protein>
    <recommendedName>
        <fullName evidence="1">Polyribonucleotide nucleotidyltransferase</fullName>
        <ecNumber evidence="1">2.7.7.8</ecNumber>
    </recommendedName>
    <alternativeName>
        <fullName evidence="1">Polynucleotide phosphorylase</fullName>
        <shortName evidence="1">PNPase</shortName>
    </alternativeName>
</protein>
<dbReference type="EC" id="2.7.7.8" evidence="1"/>
<dbReference type="EMBL" id="CP000672">
    <property type="protein sequence ID" value="ABQ99739.1"/>
    <property type="molecule type" value="Genomic_DNA"/>
</dbReference>
<dbReference type="SMR" id="A5UG34"/>
<dbReference type="KEGG" id="hiq:CGSHiGG_03775"/>
<dbReference type="HOGENOM" id="CLU_004217_2_2_6"/>
<dbReference type="Proteomes" id="UP000001990">
    <property type="component" value="Chromosome"/>
</dbReference>
<dbReference type="GO" id="GO:0005829">
    <property type="term" value="C:cytosol"/>
    <property type="evidence" value="ECO:0007669"/>
    <property type="project" value="TreeGrafter"/>
</dbReference>
<dbReference type="GO" id="GO:0000175">
    <property type="term" value="F:3'-5'-RNA exonuclease activity"/>
    <property type="evidence" value="ECO:0007669"/>
    <property type="project" value="TreeGrafter"/>
</dbReference>
<dbReference type="GO" id="GO:0000287">
    <property type="term" value="F:magnesium ion binding"/>
    <property type="evidence" value="ECO:0007669"/>
    <property type="project" value="UniProtKB-UniRule"/>
</dbReference>
<dbReference type="GO" id="GO:0004654">
    <property type="term" value="F:polyribonucleotide nucleotidyltransferase activity"/>
    <property type="evidence" value="ECO:0007669"/>
    <property type="project" value="UniProtKB-UniRule"/>
</dbReference>
<dbReference type="GO" id="GO:0003723">
    <property type="term" value="F:RNA binding"/>
    <property type="evidence" value="ECO:0007669"/>
    <property type="project" value="UniProtKB-UniRule"/>
</dbReference>
<dbReference type="GO" id="GO:0006402">
    <property type="term" value="P:mRNA catabolic process"/>
    <property type="evidence" value="ECO:0007669"/>
    <property type="project" value="UniProtKB-UniRule"/>
</dbReference>
<dbReference type="GO" id="GO:0006396">
    <property type="term" value="P:RNA processing"/>
    <property type="evidence" value="ECO:0007669"/>
    <property type="project" value="InterPro"/>
</dbReference>
<dbReference type="CDD" id="cd02393">
    <property type="entry name" value="KH-I_PNPase"/>
    <property type="match status" value="1"/>
</dbReference>
<dbReference type="CDD" id="cd11363">
    <property type="entry name" value="RNase_PH_PNPase_1"/>
    <property type="match status" value="1"/>
</dbReference>
<dbReference type="CDD" id="cd11364">
    <property type="entry name" value="RNase_PH_PNPase_2"/>
    <property type="match status" value="1"/>
</dbReference>
<dbReference type="CDD" id="cd04472">
    <property type="entry name" value="S1_PNPase"/>
    <property type="match status" value="1"/>
</dbReference>
<dbReference type="FunFam" id="2.40.50.140:FF:000023">
    <property type="entry name" value="Polyribonucleotide nucleotidyltransferase"/>
    <property type="match status" value="1"/>
</dbReference>
<dbReference type="FunFam" id="3.30.1370.10:FF:000001">
    <property type="entry name" value="Polyribonucleotide nucleotidyltransferase"/>
    <property type="match status" value="1"/>
</dbReference>
<dbReference type="FunFam" id="3.30.230.70:FF:000001">
    <property type="entry name" value="Polyribonucleotide nucleotidyltransferase"/>
    <property type="match status" value="1"/>
</dbReference>
<dbReference type="FunFam" id="3.30.230.70:FF:000002">
    <property type="entry name" value="Polyribonucleotide nucleotidyltransferase"/>
    <property type="match status" value="1"/>
</dbReference>
<dbReference type="Gene3D" id="3.30.230.70">
    <property type="entry name" value="GHMP Kinase, N-terminal domain"/>
    <property type="match status" value="2"/>
</dbReference>
<dbReference type="Gene3D" id="3.30.1370.10">
    <property type="entry name" value="K Homology domain, type 1"/>
    <property type="match status" value="1"/>
</dbReference>
<dbReference type="Gene3D" id="2.40.50.140">
    <property type="entry name" value="Nucleic acid-binding proteins"/>
    <property type="match status" value="1"/>
</dbReference>
<dbReference type="HAMAP" id="MF_01595">
    <property type="entry name" value="PNPase"/>
    <property type="match status" value="1"/>
</dbReference>
<dbReference type="InterPro" id="IPR001247">
    <property type="entry name" value="ExoRNase_PH_dom1"/>
</dbReference>
<dbReference type="InterPro" id="IPR015847">
    <property type="entry name" value="ExoRNase_PH_dom2"/>
</dbReference>
<dbReference type="InterPro" id="IPR036345">
    <property type="entry name" value="ExoRNase_PH_dom2_sf"/>
</dbReference>
<dbReference type="InterPro" id="IPR004087">
    <property type="entry name" value="KH_dom"/>
</dbReference>
<dbReference type="InterPro" id="IPR004088">
    <property type="entry name" value="KH_dom_type_1"/>
</dbReference>
<dbReference type="InterPro" id="IPR036612">
    <property type="entry name" value="KH_dom_type_1_sf"/>
</dbReference>
<dbReference type="InterPro" id="IPR012340">
    <property type="entry name" value="NA-bd_OB-fold"/>
</dbReference>
<dbReference type="InterPro" id="IPR012162">
    <property type="entry name" value="PNPase"/>
</dbReference>
<dbReference type="InterPro" id="IPR027408">
    <property type="entry name" value="PNPase/RNase_PH_dom_sf"/>
</dbReference>
<dbReference type="InterPro" id="IPR015848">
    <property type="entry name" value="PNPase_PH_RNA-bd_bac/org-type"/>
</dbReference>
<dbReference type="InterPro" id="IPR020568">
    <property type="entry name" value="Ribosomal_Su5_D2-typ_SF"/>
</dbReference>
<dbReference type="InterPro" id="IPR003029">
    <property type="entry name" value="S1_domain"/>
</dbReference>
<dbReference type="NCBIfam" id="TIGR03591">
    <property type="entry name" value="polynuc_phos"/>
    <property type="match status" value="1"/>
</dbReference>
<dbReference type="NCBIfam" id="NF008805">
    <property type="entry name" value="PRK11824.1"/>
    <property type="match status" value="1"/>
</dbReference>
<dbReference type="PANTHER" id="PTHR11252">
    <property type="entry name" value="POLYRIBONUCLEOTIDE NUCLEOTIDYLTRANSFERASE"/>
    <property type="match status" value="1"/>
</dbReference>
<dbReference type="PANTHER" id="PTHR11252:SF0">
    <property type="entry name" value="POLYRIBONUCLEOTIDE NUCLEOTIDYLTRANSFERASE 1, MITOCHONDRIAL"/>
    <property type="match status" value="1"/>
</dbReference>
<dbReference type="Pfam" id="PF00013">
    <property type="entry name" value="KH_1"/>
    <property type="match status" value="1"/>
</dbReference>
<dbReference type="Pfam" id="PF03726">
    <property type="entry name" value="PNPase"/>
    <property type="match status" value="1"/>
</dbReference>
<dbReference type="Pfam" id="PF01138">
    <property type="entry name" value="RNase_PH"/>
    <property type="match status" value="2"/>
</dbReference>
<dbReference type="Pfam" id="PF03725">
    <property type="entry name" value="RNase_PH_C"/>
    <property type="match status" value="2"/>
</dbReference>
<dbReference type="Pfam" id="PF00575">
    <property type="entry name" value="S1"/>
    <property type="match status" value="1"/>
</dbReference>
<dbReference type="PIRSF" id="PIRSF005499">
    <property type="entry name" value="PNPase"/>
    <property type="match status" value="1"/>
</dbReference>
<dbReference type="SMART" id="SM00322">
    <property type="entry name" value="KH"/>
    <property type="match status" value="1"/>
</dbReference>
<dbReference type="SMART" id="SM00316">
    <property type="entry name" value="S1"/>
    <property type="match status" value="1"/>
</dbReference>
<dbReference type="SUPFAM" id="SSF54791">
    <property type="entry name" value="Eukaryotic type KH-domain (KH-domain type I)"/>
    <property type="match status" value="1"/>
</dbReference>
<dbReference type="SUPFAM" id="SSF50249">
    <property type="entry name" value="Nucleic acid-binding proteins"/>
    <property type="match status" value="1"/>
</dbReference>
<dbReference type="SUPFAM" id="SSF55666">
    <property type="entry name" value="Ribonuclease PH domain 2-like"/>
    <property type="match status" value="2"/>
</dbReference>
<dbReference type="SUPFAM" id="SSF54211">
    <property type="entry name" value="Ribosomal protein S5 domain 2-like"/>
    <property type="match status" value="2"/>
</dbReference>
<dbReference type="PROSITE" id="PS50084">
    <property type="entry name" value="KH_TYPE_1"/>
    <property type="match status" value="1"/>
</dbReference>
<dbReference type="PROSITE" id="PS50126">
    <property type="entry name" value="S1"/>
    <property type="match status" value="1"/>
</dbReference>
<gene>
    <name evidence="1" type="primary">pnp</name>
    <name type="ordered locus">CGSHiGG_03775</name>
</gene>
<feature type="chain" id="PRO_0000329672" description="Polyribonucleotide nucleotidyltransferase">
    <location>
        <begin position="1"/>
        <end position="709"/>
    </location>
</feature>
<feature type="domain" description="KH" evidence="1">
    <location>
        <begin position="552"/>
        <end position="611"/>
    </location>
</feature>
<feature type="domain" description="S1 motif" evidence="1">
    <location>
        <begin position="621"/>
        <end position="689"/>
    </location>
</feature>
<feature type="binding site" evidence="1">
    <location>
        <position position="485"/>
    </location>
    <ligand>
        <name>Mg(2+)</name>
        <dbReference type="ChEBI" id="CHEBI:18420"/>
    </ligand>
</feature>
<feature type="binding site" evidence="1">
    <location>
        <position position="491"/>
    </location>
    <ligand>
        <name>Mg(2+)</name>
        <dbReference type="ChEBI" id="CHEBI:18420"/>
    </ligand>
</feature>